<dbReference type="EMBL" id="Z71579">
    <property type="protein sequence ID" value="CAA96227.1"/>
    <property type="molecule type" value="Genomic_DNA"/>
</dbReference>
<dbReference type="SMR" id="P69621"/>
<protein>
    <recommendedName>
        <fullName>Uncharacterized 7.3 kDa protein in cox-rep intergenic region</fullName>
    </recommendedName>
    <alternativeName>
        <fullName>ORF23</fullName>
    </alternativeName>
    <alternativeName>
        <fullName>ORF7</fullName>
    </alternativeName>
</protein>
<organismHost>
    <name type="scientific">Enterococcus</name>
    <dbReference type="NCBI Taxonomy" id="1350"/>
</organismHost>
<sequence>MATKNRTIIKKYADRWHKEACHLYAKWLNAKRQGDEEAANYYFSKYITAGDNWINYTKFAH</sequence>
<reference key="1">
    <citation type="submission" date="1996-11" db="EMBL/GenBank/DDBJ databases">
        <authorList>
            <person name="Skowronek K."/>
            <person name="Baranowski S."/>
        </authorList>
    </citation>
    <scope>NUCLEOTIDE SEQUENCE [GENOMIC DNA]</scope>
</reference>
<name>YO07_BPS2</name>
<organism>
    <name type="scientific">Haemophilus phage S2</name>
    <name type="common">Bacteriophage S2</name>
    <dbReference type="NCBI Taxonomy" id="53000"/>
    <lineage>
        <taxon>Viruses</taxon>
        <taxon>Duplodnaviria</taxon>
        <taxon>Heunggongvirae</taxon>
        <taxon>Uroviricota</taxon>
        <taxon>Caudoviricetes</taxon>
    </lineage>
</organism>
<accession>P69621</accession>
<accession>P51708</accession>
<feature type="chain" id="PRO_0000165322" description="Uncharacterized 7.3 kDa protein in cox-rep intergenic region">
    <location>
        <begin position="1"/>
        <end position="61"/>
    </location>
</feature>
<proteinExistence type="predicted"/>